<dbReference type="EMBL" id="AP009152">
    <property type="protein sequence ID" value="BAG29712.1"/>
    <property type="molecule type" value="Genomic_DNA"/>
</dbReference>
<dbReference type="RefSeq" id="WP_012398433.1">
    <property type="nucleotide sequence ID" value="NC_010617.1"/>
</dbReference>
<dbReference type="SMR" id="B2GIL9"/>
<dbReference type="STRING" id="378753.KRH_13650"/>
<dbReference type="KEGG" id="krh:KRH_13650"/>
<dbReference type="eggNOG" id="COG0632">
    <property type="taxonomic scope" value="Bacteria"/>
</dbReference>
<dbReference type="HOGENOM" id="CLU_087936_2_1_11"/>
<dbReference type="OrthoDB" id="5293449at2"/>
<dbReference type="Proteomes" id="UP000008838">
    <property type="component" value="Chromosome"/>
</dbReference>
<dbReference type="GO" id="GO:0005737">
    <property type="term" value="C:cytoplasm"/>
    <property type="evidence" value="ECO:0007669"/>
    <property type="project" value="UniProtKB-SubCell"/>
</dbReference>
<dbReference type="GO" id="GO:0009379">
    <property type="term" value="C:Holliday junction helicase complex"/>
    <property type="evidence" value="ECO:0007669"/>
    <property type="project" value="InterPro"/>
</dbReference>
<dbReference type="GO" id="GO:0048476">
    <property type="term" value="C:Holliday junction resolvase complex"/>
    <property type="evidence" value="ECO:0007669"/>
    <property type="project" value="UniProtKB-UniRule"/>
</dbReference>
<dbReference type="GO" id="GO:0005524">
    <property type="term" value="F:ATP binding"/>
    <property type="evidence" value="ECO:0007669"/>
    <property type="project" value="InterPro"/>
</dbReference>
<dbReference type="GO" id="GO:0000400">
    <property type="term" value="F:four-way junction DNA binding"/>
    <property type="evidence" value="ECO:0007669"/>
    <property type="project" value="UniProtKB-UniRule"/>
</dbReference>
<dbReference type="GO" id="GO:0009378">
    <property type="term" value="F:four-way junction helicase activity"/>
    <property type="evidence" value="ECO:0007669"/>
    <property type="project" value="InterPro"/>
</dbReference>
<dbReference type="GO" id="GO:0006310">
    <property type="term" value="P:DNA recombination"/>
    <property type="evidence" value="ECO:0007669"/>
    <property type="project" value="UniProtKB-UniRule"/>
</dbReference>
<dbReference type="GO" id="GO:0006281">
    <property type="term" value="P:DNA repair"/>
    <property type="evidence" value="ECO:0007669"/>
    <property type="project" value="UniProtKB-UniRule"/>
</dbReference>
<dbReference type="CDD" id="cd14332">
    <property type="entry name" value="UBA_RuvA_C"/>
    <property type="match status" value="1"/>
</dbReference>
<dbReference type="Gene3D" id="1.10.150.20">
    <property type="entry name" value="5' to 3' exonuclease, C-terminal subdomain"/>
    <property type="match status" value="1"/>
</dbReference>
<dbReference type="Gene3D" id="1.10.8.10">
    <property type="entry name" value="DNA helicase RuvA subunit, C-terminal domain"/>
    <property type="match status" value="1"/>
</dbReference>
<dbReference type="Gene3D" id="2.40.50.140">
    <property type="entry name" value="Nucleic acid-binding proteins"/>
    <property type="match status" value="1"/>
</dbReference>
<dbReference type="HAMAP" id="MF_00031">
    <property type="entry name" value="DNA_HJ_migration_RuvA"/>
    <property type="match status" value="1"/>
</dbReference>
<dbReference type="InterPro" id="IPR013849">
    <property type="entry name" value="DNA_helicase_Holl-junc_RuvA_I"/>
</dbReference>
<dbReference type="InterPro" id="IPR003583">
    <property type="entry name" value="Hlx-hairpin-Hlx_DNA-bd_motif"/>
</dbReference>
<dbReference type="InterPro" id="IPR012340">
    <property type="entry name" value="NA-bd_OB-fold"/>
</dbReference>
<dbReference type="InterPro" id="IPR000085">
    <property type="entry name" value="RuvA"/>
</dbReference>
<dbReference type="InterPro" id="IPR010994">
    <property type="entry name" value="RuvA_2-like"/>
</dbReference>
<dbReference type="InterPro" id="IPR011114">
    <property type="entry name" value="RuvA_C"/>
</dbReference>
<dbReference type="InterPro" id="IPR036267">
    <property type="entry name" value="RuvA_C_sf"/>
</dbReference>
<dbReference type="NCBIfam" id="TIGR00084">
    <property type="entry name" value="ruvA"/>
    <property type="match status" value="1"/>
</dbReference>
<dbReference type="Pfam" id="PF14520">
    <property type="entry name" value="HHH_5"/>
    <property type="match status" value="1"/>
</dbReference>
<dbReference type="Pfam" id="PF07499">
    <property type="entry name" value="RuvA_C"/>
    <property type="match status" value="1"/>
</dbReference>
<dbReference type="Pfam" id="PF01330">
    <property type="entry name" value="RuvA_N"/>
    <property type="match status" value="1"/>
</dbReference>
<dbReference type="SMART" id="SM00278">
    <property type="entry name" value="HhH1"/>
    <property type="match status" value="2"/>
</dbReference>
<dbReference type="SUPFAM" id="SSF46929">
    <property type="entry name" value="DNA helicase RuvA subunit, C-terminal domain"/>
    <property type="match status" value="1"/>
</dbReference>
<dbReference type="SUPFAM" id="SSF50249">
    <property type="entry name" value="Nucleic acid-binding proteins"/>
    <property type="match status" value="1"/>
</dbReference>
<dbReference type="SUPFAM" id="SSF47781">
    <property type="entry name" value="RuvA domain 2-like"/>
    <property type="match status" value="1"/>
</dbReference>
<accession>B2GIL9</accession>
<protein>
    <recommendedName>
        <fullName evidence="1">Holliday junction branch migration complex subunit RuvA</fullName>
    </recommendedName>
</protein>
<sequence length="213" mass="22278">MIASVTGEVAFVGATLAVVEVSGFGIEVHASPRTLSGLRVGATTRLHTAYIARKDEAPLLFGFAQGDEKEIFTVMLGVSGVGPRTALAAVSVLGPEDARRAIAAGDDKAFTAVPGIGPKSARRIVLELADKLVLPEPPVQQANQPQVPVWRDQVVDALTGLGWSEKDAVRGIEDALQTQPELGDSGNVAEILRAVLSWLGTSKGTTHAPTGRR</sequence>
<name>RUVA_KOCRD</name>
<feature type="chain" id="PRO_1000090327" description="Holliday junction branch migration complex subunit RuvA">
    <location>
        <begin position="1"/>
        <end position="213"/>
    </location>
</feature>
<feature type="region of interest" description="Domain I" evidence="1">
    <location>
        <begin position="1"/>
        <end position="64"/>
    </location>
</feature>
<feature type="region of interest" description="Domain II" evidence="1">
    <location>
        <begin position="65"/>
        <end position="143"/>
    </location>
</feature>
<feature type="region of interest" description="Flexible linker" evidence="1">
    <location>
        <begin position="144"/>
        <end position="152"/>
    </location>
</feature>
<feature type="region of interest" description="Domain III" evidence="1">
    <location>
        <begin position="152"/>
        <end position="213"/>
    </location>
</feature>
<gene>
    <name evidence="1" type="primary">ruvA</name>
    <name type="ordered locus">KRH_13650</name>
</gene>
<comment type="function">
    <text evidence="1">The RuvA-RuvB-RuvC complex processes Holliday junction (HJ) DNA during genetic recombination and DNA repair, while the RuvA-RuvB complex plays an important role in the rescue of blocked DNA replication forks via replication fork reversal (RFR). RuvA specifically binds to HJ cruciform DNA, conferring on it an open structure. The RuvB hexamer acts as an ATP-dependent pump, pulling dsDNA into and through the RuvAB complex. HJ branch migration allows RuvC to scan DNA until it finds its consensus sequence, where it cleaves and resolves the cruciform DNA.</text>
</comment>
<comment type="subunit">
    <text evidence="1">Homotetramer. Forms an RuvA(8)-RuvB(12)-Holliday junction (HJ) complex. HJ DNA is sandwiched between 2 RuvA tetramers; dsDNA enters through RuvA and exits via RuvB. An RuvB hexamer assembles on each DNA strand where it exits the tetramer. Each RuvB hexamer is contacted by two RuvA subunits (via domain III) on 2 adjacent RuvB subunits; this complex drives branch migration. In the full resolvosome a probable DNA-RuvA(4)-RuvB(12)-RuvC(2) complex forms which resolves the HJ.</text>
</comment>
<comment type="subcellular location">
    <subcellularLocation>
        <location evidence="1">Cytoplasm</location>
    </subcellularLocation>
</comment>
<comment type="domain">
    <text evidence="1">Has three domains with a flexible linker between the domains II and III and assumes an 'L' shape. Domain III is highly mobile and contacts RuvB.</text>
</comment>
<comment type="similarity">
    <text evidence="1">Belongs to the RuvA family.</text>
</comment>
<organism>
    <name type="scientific">Kocuria rhizophila (strain ATCC 9341 / DSM 348 / NBRC 103217 / DC2201)</name>
    <dbReference type="NCBI Taxonomy" id="378753"/>
    <lineage>
        <taxon>Bacteria</taxon>
        <taxon>Bacillati</taxon>
        <taxon>Actinomycetota</taxon>
        <taxon>Actinomycetes</taxon>
        <taxon>Micrococcales</taxon>
        <taxon>Micrococcaceae</taxon>
        <taxon>Kocuria</taxon>
    </lineage>
</organism>
<proteinExistence type="inferred from homology"/>
<keyword id="KW-0963">Cytoplasm</keyword>
<keyword id="KW-0227">DNA damage</keyword>
<keyword id="KW-0233">DNA recombination</keyword>
<keyword id="KW-0234">DNA repair</keyword>
<keyword id="KW-0238">DNA-binding</keyword>
<keyword id="KW-1185">Reference proteome</keyword>
<evidence type="ECO:0000255" key="1">
    <source>
        <dbReference type="HAMAP-Rule" id="MF_00031"/>
    </source>
</evidence>
<reference key="1">
    <citation type="journal article" date="2008" name="J. Bacteriol.">
        <title>Complete genome sequence of the soil actinomycete Kocuria rhizophila.</title>
        <authorList>
            <person name="Takarada H."/>
            <person name="Sekine M."/>
            <person name="Kosugi H."/>
            <person name="Matsuo Y."/>
            <person name="Fujisawa T."/>
            <person name="Omata S."/>
            <person name="Kishi E."/>
            <person name="Shimizu A."/>
            <person name="Tsukatani N."/>
            <person name="Tanikawa S."/>
            <person name="Fujita N."/>
            <person name="Harayama S."/>
        </authorList>
    </citation>
    <scope>NUCLEOTIDE SEQUENCE [LARGE SCALE GENOMIC DNA]</scope>
    <source>
        <strain>ATCC 9341 / DSM 348 / NBRC 103217 / DC2201</strain>
    </source>
</reference>